<sequence length="134" mass="15066">MENKKTIYFLCTGNSCRSQMAEAWGKQYLGDKWNVYSAGIEAHGVNPNAIKAMNEVNIDITNQTSDIIDANILNRADLVVTLCSHADAVCPSTPPHVNRVHWGFDDPAGKEWPEFQRVRDEIGERIKRFSETGE</sequence>
<accession>C3LDK1</accession>
<proteinExistence type="inferred from homology"/>
<protein>
    <recommendedName>
        <fullName evidence="1">Arsenate reductase</fullName>
        <ecNumber evidence="1">1.20.4.4</ecNumber>
    </recommendedName>
</protein>
<name>ARSC_BACAC</name>
<dbReference type="EC" id="1.20.4.4" evidence="1"/>
<dbReference type="EMBL" id="CP001215">
    <property type="protein sequence ID" value="ACP15188.1"/>
    <property type="molecule type" value="Genomic_DNA"/>
</dbReference>
<dbReference type="RefSeq" id="WP_000428348.1">
    <property type="nucleotide sequence ID" value="NC_012581.1"/>
</dbReference>
<dbReference type="SMR" id="C3LDK1"/>
<dbReference type="GeneID" id="45022981"/>
<dbReference type="KEGG" id="bah:BAMEG_1416"/>
<dbReference type="HOGENOM" id="CLU_071415_3_2_9"/>
<dbReference type="GO" id="GO:0005737">
    <property type="term" value="C:cytoplasm"/>
    <property type="evidence" value="ECO:0007669"/>
    <property type="project" value="UniProtKB-SubCell"/>
</dbReference>
<dbReference type="GO" id="GO:0030612">
    <property type="term" value="F:arsenate reductase (thioredoxin) activity"/>
    <property type="evidence" value="ECO:0007669"/>
    <property type="project" value="UniProtKB-UniRule"/>
</dbReference>
<dbReference type="GO" id="GO:0004725">
    <property type="term" value="F:protein tyrosine phosphatase activity"/>
    <property type="evidence" value="ECO:0007669"/>
    <property type="project" value="InterPro"/>
</dbReference>
<dbReference type="GO" id="GO:0046685">
    <property type="term" value="P:response to arsenic-containing substance"/>
    <property type="evidence" value="ECO:0007669"/>
    <property type="project" value="UniProtKB-KW"/>
</dbReference>
<dbReference type="CDD" id="cd16345">
    <property type="entry name" value="LMWP_ArsC"/>
    <property type="match status" value="1"/>
</dbReference>
<dbReference type="FunFam" id="3.40.50.2300:FF:000237">
    <property type="entry name" value="Arsenate reductase"/>
    <property type="match status" value="1"/>
</dbReference>
<dbReference type="Gene3D" id="3.40.50.2300">
    <property type="match status" value="1"/>
</dbReference>
<dbReference type="HAMAP" id="MF_01624">
    <property type="entry name" value="Arsenate_reduct"/>
    <property type="match status" value="1"/>
</dbReference>
<dbReference type="InterPro" id="IPR014064">
    <property type="entry name" value="Arsenate_reductase_ArsC"/>
</dbReference>
<dbReference type="InterPro" id="IPR023485">
    <property type="entry name" value="Ptyr_pPase"/>
</dbReference>
<dbReference type="InterPro" id="IPR036196">
    <property type="entry name" value="Ptyr_pPase_sf"/>
</dbReference>
<dbReference type="NCBIfam" id="TIGR02691">
    <property type="entry name" value="arsC_pI258_fam"/>
    <property type="match status" value="1"/>
</dbReference>
<dbReference type="NCBIfam" id="NF010053">
    <property type="entry name" value="PRK13530.1"/>
    <property type="match status" value="1"/>
</dbReference>
<dbReference type="PANTHER" id="PTHR43428">
    <property type="entry name" value="ARSENATE REDUCTASE"/>
    <property type="match status" value="1"/>
</dbReference>
<dbReference type="PANTHER" id="PTHR43428:SF1">
    <property type="entry name" value="ARSENATE REDUCTASE"/>
    <property type="match status" value="1"/>
</dbReference>
<dbReference type="Pfam" id="PF01451">
    <property type="entry name" value="LMWPc"/>
    <property type="match status" value="1"/>
</dbReference>
<dbReference type="SMART" id="SM00226">
    <property type="entry name" value="LMWPc"/>
    <property type="match status" value="1"/>
</dbReference>
<dbReference type="SUPFAM" id="SSF52788">
    <property type="entry name" value="Phosphotyrosine protein phosphatases I"/>
    <property type="match status" value="1"/>
</dbReference>
<organism>
    <name type="scientific">Bacillus anthracis (strain CDC 684 / NRRL 3495)</name>
    <dbReference type="NCBI Taxonomy" id="568206"/>
    <lineage>
        <taxon>Bacteria</taxon>
        <taxon>Bacillati</taxon>
        <taxon>Bacillota</taxon>
        <taxon>Bacilli</taxon>
        <taxon>Bacillales</taxon>
        <taxon>Bacillaceae</taxon>
        <taxon>Bacillus</taxon>
        <taxon>Bacillus cereus group</taxon>
    </lineage>
</organism>
<feature type="chain" id="PRO_1000186114" description="Arsenate reductase">
    <location>
        <begin position="1"/>
        <end position="134"/>
    </location>
</feature>
<feature type="active site" description="Nucleophile" evidence="1">
    <location>
        <position position="11"/>
    </location>
</feature>
<feature type="active site" description="Nucleophile" evidence="1">
    <location>
        <position position="83"/>
    </location>
</feature>
<feature type="active site" description="Nucleophile" evidence="1">
    <location>
        <position position="90"/>
    </location>
</feature>
<feature type="disulfide bond" description="Redox-active; alternate" evidence="1">
    <location>
        <begin position="11"/>
        <end position="83"/>
    </location>
</feature>
<feature type="disulfide bond" description="Redox-active; alternate" evidence="1">
    <location>
        <begin position="83"/>
        <end position="90"/>
    </location>
</feature>
<gene>
    <name evidence="1" type="primary">arsC</name>
    <name type="ordered locus">BAMEG_1416</name>
</gene>
<reference key="1">
    <citation type="submission" date="2008-10" db="EMBL/GenBank/DDBJ databases">
        <title>Genome sequence of Bacillus anthracis str. CDC 684.</title>
        <authorList>
            <person name="Dodson R.J."/>
            <person name="Munk A.C."/>
            <person name="Brettin T."/>
            <person name="Bruce D."/>
            <person name="Detter C."/>
            <person name="Tapia R."/>
            <person name="Han C."/>
            <person name="Sutton G."/>
            <person name="Sims D."/>
        </authorList>
    </citation>
    <scope>NUCLEOTIDE SEQUENCE [LARGE SCALE GENOMIC DNA]</scope>
    <source>
        <strain>CDC 684 / NRRL 3495</strain>
    </source>
</reference>
<evidence type="ECO:0000255" key="1">
    <source>
        <dbReference type="HAMAP-Rule" id="MF_01624"/>
    </source>
</evidence>
<keyword id="KW-0059">Arsenical resistance</keyword>
<keyword id="KW-0963">Cytoplasm</keyword>
<keyword id="KW-1015">Disulfide bond</keyword>
<keyword id="KW-0560">Oxidoreductase</keyword>
<keyword id="KW-0676">Redox-active center</keyword>
<comment type="function">
    <text evidence="1">Catalyzes the reduction of arsenate [As(V)] to arsenite [As(III)].</text>
</comment>
<comment type="catalytic activity">
    <reaction evidence="1">
        <text>arsenate + [thioredoxin]-dithiol + H(+) = arsenite + [thioredoxin]-disulfide + H2O</text>
        <dbReference type="Rhea" id="RHEA:43848"/>
        <dbReference type="Rhea" id="RHEA-COMP:10698"/>
        <dbReference type="Rhea" id="RHEA-COMP:10700"/>
        <dbReference type="ChEBI" id="CHEBI:15377"/>
        <dbReference type="ChEBI" id="CHEBI:15378"/>
        <dbReference type="ChEBI" id="CHEBI:29242"/>
        <dbReference type="ChEBI" id="CHEBI:29950"/>
        <dbReference type="ChEBI" id="CHEBI:48597"/>
        <dbReference type="ChEBI" id="CHEBI:50058"/>
        <dbReference type="EC" id="1.20.4.4"/>
    </reaction>
</comment>
<comment type="subcellular location">
    <subcellularLocation>
        <location evidence="1">Cytoplasm</location>
    </subcellularLocation>
</comment>
<comment type="similarity">
    <text evidence="1">Belongs to the low molecular weight phosphotyrosine protein phosphatase family. Thioredoxin-coupled ArsC subfamily.</text>
</comment>